<comment type="function">
    <text evidence="1">Catalyzes the formation of 6,7-dimethyl-8-ribityllumazine by condensation of 5-amino-6-(D-ribitylamino)uracil with 3,4-dihydroxy-2-butanone 4-phosphate. This is the penultimate step in the biosynthesis of riboflavin.</text>
</comment>
<comment type="catalytic activity">
    <reaction evidence="1">
        <text>(2S)-2-hydroxy-3-oxobutyl phosphate + 5-amino-6-(D-ribitylamino)uracil = 6,7-dimethyl-8-(1-D-ribityl)lumazine + phosphate + 2 H2O + H(+)</text>
        <dbReference type="Rhea" id="RHEA:26152"/>
        <dbReference type="ChEBI" id="CHEBI:15377"/>
        <dbReference type="ChEBI" id="CHEBI:15378"/>
        <dbReference type="ChEBI" id="CHEBI:15934"/>
        <dbReference type="ChEBI" id="CHEBI:43474"/>
        <dbReference type="ChEBI" id="CHEBI:58201"/>
        <dbReference type="ChEBI" id="CHEBI:58830"/>
        <dbReference type="EC" id="2.5.1.78"/>
    </reaction>
</comment>
<comment type="pathway">
    <text evidence="1">Cofactor biosynthesis; riboflavin biosynthesis; riboflavin from 2-hydroxy-3-oxobutyl phosphate and 5-amino-6-(D-ribitylamino)uracil: step 1/2.</text>
</comment>
<comment type="similarity">
    <text evidence="1">Belongs to the DMRL synthase family.</text>
</comment>
<proteinExistence type="inferred from homology"/>
<keyword id="KW-1185">Reference proteome</keyword>
<keyword id="KW-0686">Riboflavin biosynthesis</keyword>
<keyword id="KW-0808">Transferase</keyword>
<organism>
    <name type="scientific">Saccharopolyspora erythraea (strain ATCC 11635 / DSM 40517 / JCM 4748 / NBRC 13426 / NCIMB 8594 / NRRL 2338)</name>
    <dbReference type="NCBI Taxonomy" id="405948"/>
    <lineage>
        <taxon>Bacteria</taxon>
        <taxon>Bacillati</taxon>
        <taxon>Actinomycetota</taxon>
        <taxon>Actinomycetes</taxon>
        <taxon>Pseudonocardiales</taxon>
        <taxon>Pseudonocardiaceae</taxon>
        <taxon>Saccharopolyspora</taxon>
    </lineage>
</organism>
<feature type="chain" id="PRO_1000040502" description="6,7-dimethyl-8-ribityllumazine synthase">
    <location>
        <begin position="1"/>
        <end position="165"/>
    </location>
</feature>
<feature type="active site" description="Proton donor" evidence="1">
    <location>
        <position position="88"/>
    </location>
</feature>
<feature type="binding site" evidence="1">
    <location>
        <position position="26"/>
    </location>
    <ligand>
        <name>5-amino-6-(D-ribitylamino)uracil</name>
        <dbReference type="ChEBI" id="CHEBI:15934"/>
    </ligand>
</feature>
<feature type="binding site" evidence="1">
    <location>
        <begin position="58"/>
        <end position="60"/>
    </location>
    <ligand>
        <name>5-amino-6-(D-ribitylamino)uracil</name>
        <dbReference type="ChEBI" id="CHEBI:15934"/>
    </ligand>
</feature>
<feature type="binding site" evidence="1">
    <location>
        <begin position="80"/>
        <end position="82"/>
    </location>
    <ligand>
        <name>5-amino-6-(D-ribitylamino)uracil</name>
        <dbReference type="ChEBI" id="CHEBI:15934"/>
    </ligand>
</feature>
<feature type="binding site" evidence="1">
    <location>
        <begin position="85"/>
        <end position="86"/>
    </location>
    <ligand>
        <name>(2S)-2-hydroxy-3-oxobutyl phosphate</name>
        <dbReference type="ChEBI" id="CHEBI:58830"/>
    </ligand>
</feature>
<feature type="binding site" evidence="1">
    <location>
        <position position="113"/>
    </location>
    <ligand>
        <name>5-amino-6-(D-ribitylamino)uracil</name>
        <dbReference type="ChEBI" id="CHEBI:15934"/>
    </ligand>
</feature>
<feature type="binding site" evidence="1">
    <location>
        <position position="127"/>
    </location>
    <ligand>
        <name>(2S)-2-hydroxy-3-oxobutyl phosphate</name>
        <dbReference type="ChEBI" id="CHEBI:58830"/>
    </ligand>
</feature>
<name>RISB_SACEN</name>
<protein>
    <recommendedName>
        <fullName evidence="1">6,7-dimethyl-8-ribityllumazine synthase</fullName>
        <shortName evidence="1">DMRL synthase</shortName>
        <shortName evidence="1">LS</shortName>
        <shortName evidence="1">Lumazine synthase</shortName>
        <ecNumber evidence="1">2.5.1.78</ecNumber>
    </recommendedName>
</protein>
<reference key="1">
    <citation type="journal article" date="2007" name="Nat. Biotechnol.">
        <title>Complete genome sequence of the erythromycin-producing bacterium Saccharopolyspora erythraea NRRL23338.</title>
        <authorList>
            <person name="Oliynyk M."/>
            <person name="Samborskyy M."/>
            <person name="Lester J.B."/>
            <person name="Mironenko T."/>
            <person name="Scott N."/>
            <person name="Dickens S."/>
            <person name="Haydock S.F."/>
            <person name="Leadlay P.F."/>
        </authorList>
    </citation>
    <scope>NUCLEOTIDE SEQUENCE [LARGE SCALE GENOMIC DNA]</scope>
    <source>
        <strain>ATCC 11635 / DSM 40517 / JCM 4748 / NBRC 13426 / NCIMB 8594 / NRRL 2338</strain>
    </source>
</reference>
<gene>
    <name evidence="1" type="primary">ribH</name>
    <name type="ordered locus">SACE_2124</name>
</gene>
<dbReference type="EC" id="2.5.1.78" evidence="1"/>
<dbReference type="EMBL" id="AM420293">
    <property type="protein sequence ID" value="CAM01430.1"/>
    <property type="molecule type" value="Genomic_DNA"/>
</dbReference>
<dbReference type="RefSeq" id="WP_009942996.1">
    <property type="nucleotide sequence ID" value="NC_009142.1"/>
</dbReference>
<dbReference type="SMR" id="A4FBK5"/>
<dbReference type="STRING" id="405948.SACE_2124"/>
<dbReference type="KEGG" id="sen:SACE_2124"/>
<dbReference type="eggNOG" id="COG0054">
    <property type="taxonomic scope" value="Bacteria"/>
</dbReference>
<dbReference type="HOGENOM" id="CLU_089358_1_2_11"/>
<dbReference type="OrthoDB" id="9809709at2"/>
<dbReference type="UniPathway" id="UPA00275">
    <property type="reaction ID" value="UER00404"/>
</dbReference>
<dbReference type="Proteomes" id="UP000006728">
    <property type="component" value="Chromosome"/>
</dbReference>
<dbReference type="GO" id="GO:0005829">
    <property type="term" value="C:cytosol"/>
    <property type="evidence" value="ECO:0007669"/>
    <property type="project" value="TreeGrafter"/>
</dbReference>
<dbReference type="GO" id="GO:0009349">
    <property type="term" value="C:riboflavin synthase complex"/>
    <property type="evidence" value="ECO:0007669"/>
    <property type="project" value="InterPro"/>
</dbReference>
<dbReference type="GO" id="GO:0000906">
    <property type="term" value="F:6,7-dimethyl-8-ribityllumazine synthase activity"/>
    <property type="evidence" value="ECO:0007669"/>
    <property type="project" value="UniProtKB-UniRule"/>
</dbReference>
<dbReference type="GO" id="GO:0009231">
    <property type="term" value="P:riboflavin biosynthetic process"/>
    <property type="evidence" value="ECO:0007669"/>
    <property type="project" value="UniProtKB-UniRule"/>
</dbReference>
<dbReference type="CDD" id="cd09209">
    <property type="entry name" value="Lumazine_synthase-I"/>
    <property type="match status" value="1"/>
</dbReference>
<dbReference type="Gene3D" id="3.40.50.960">
    <property type="entry name" value="Lumazine/riboflavin synthase"/>
    <property type="match status" value="1"/>
</dbReference>
<dbReference type="HAMAP" id="MF_00178">
    <property type="entry name" value="Lumazine_synth"/>
    <property type="match status" value="1"/>
</dbReference>
<dbReference type="InterPro" id="IPR034964">
    <property type="entry name" value="LS"/>
</dbReference>
<dbReference type="InterPro" id="IPR002180">
    <property type="entry name" value="LS/RS"/>
</dbReference>
<dbReference type="InterPro" id="IPR036467">
    <property type="entry name" value="LS/RS_sf"/>
</dbReference>
<dbReference type="NCBIfam" id="TIGR00114">
    <property type="entry name" value="lumazine-synth"/>
    <property type="match status" value="1"/>
</dbReference>
<dbReference type="PANTHER" id="PTHR21058:SF0">
    <property type="entry name" value="6,7-DIMETHYL-8-RIBITYLLUMAZINE SYNTHASE"/>
    <property type="match status" value="1"/>
</dbReference>
<dbReference type="PANTHER" id="PTHR21058">
    <property type="entry name" value="6,7-DIMETHYL-8-RIBITYLLUMAZINE SYNTHASE DMRL SYNTHASE LUMAZINE SYNTHASE"/>
    <property type="match status" value="1"/>
</dbReference>
<dbReference type="Pfam" id="PF00885">
    <property type="entry name" value="DMRL_synthase"/>
    <property type="match status" value="1"/>
</dbReference>
<dbReference type="SUPFAM" id="SSF52121">
    <property type="entry name" value="Lumazine synthase"/>
    <property type="match status" value="1"/>
</dbReference>
<evidence type="ECO:0000255" key="1">
    <source>
        <dbReference type="HAMAP-Rule" id="MF_00178"/>
    </source>
</evidence>
<accession>A4FBK5</accession>
<sequence>MSGEGRPQASVPQAGELRLGIAAIRWHAKITDRLLERALAAASEAGVAEPTVVRVPGSIELPVVCQQLAHQHDAVVALGVVIRGGTPHFEYVCDSVTAGLTRVSLDESTPVGNGVLTCDTEEQALARAGFEDSAEDKGFEATAAALETALVLRELRGFENGRGFL</sequence>